<proteinExistence type="inferred from homology"/>
<protein>
    <recommendedName>
        <fullName>Mannonate dehydratase</fullName>
        <ecNumber>4.2.1.8</ecNumber>
    </recommendedName>
    <alternativeName>
        <fullName>D-mannonate hydro-lyase</fullName>
    </alternativeName>
</protein>
<accession>Q9ZFL7</accession>
<accession>Q09LX9</accession>
<organism>
    <name type="scientific">Geobacillus stearothermophilus</name>
    <name type="common">Bacillus stearothermophilus</name>
    <dbReference type="NCBI Taxonomy" id="1422"/>
    <lineage>
        <taxon>Bacteria</taxon>
        <taxon>Bacillati</taxon>
        <taxon>Bacillota</taxon>
        <taxon>Bacilli</taxon>
        <taxon>Bacillales</taxon>
        <taxon>Anoxybacillaceae</taxon>
        <taxon>Geobacillus</taxon>
    </lineage>
</organism>
<name>UXUA_GEOSE</name>
<feature type="chain" id="PRO_0000170663" description="Mannonate dehydratase">
    <location>
        <begin position="1"/>
        <end position="371"/>
    </location>
</feature>
<reference key="1">
    <citation type="journal article" date="1999" name="J. Bacteriol.">
        <title>The glucuronic acid utilization gene cluster from Bacillus stearothermophilus T-6.</title>
        <authorList>
            <person name="Shulami S."/>
            <person name="Gat O."/>
            <person name="Sonenshein A.L."/>
            <person name="Shoham Y."/>
        </authorList>
    </citation>
    <scope>NUCLEOTIDE SEQUENCE [GENOMIC DNA]</scope>
    <source>
        <strain>T-6</strain>
    </source>
</reference>
<dbReference type="EC" id="4.2.1.8"/>
<dbReference type="EMBL" id="DQ868502">
    <property type="protein sequence ID" value="ABI49946.1"/>
    <property type="molecule type" value="Genomic_DNA"/>
</dbReference>
<dbReference type="SMR" id="Q9ZFL7"/>
<dbReference type="UniPathway" id="UPA00246"/>
<dbReference type="GO" id="GO:0008198">
    <property type="term" value="F:ferrous iron binding"/>
    <property type="evidence" value="ECO:0007669"/>
    <property type="project" value="TreeGrafter"/>
</dbReference>
<dbReference type="GO" id="GO:0030145">
    <property type="term" value="F:manganese ion binding"/>
    <property type="evidence" value="ECO:0007669"/>
    <property type="project" value="TreeGrafter"/>
</dbReference>
<dbReference type="GO" id="GO:0008927">
    <property type="term" value="F:mannonate dehydratase activity"/>
    <property type="evidence" value="ECO:0007669"/>
    <property type="project" value="UniProtKB-UniRule"/>
</dbReference>
<dbReference type="GO" id="GO:0042840">
    <property type="term" value="P:D-glucuronate catabolic process"/>
    <property type="evidence" value="ECO:0007669"/>
    <property type="project" value="TreeGrafter"/>
</dbReference>
<dbReference type="Gene3D" id="3.20.20.150">
    <property type="entry name" value="Divalent-metal-dependent TIM barrel enzymes"/>
    <property type="match status" value="1"/>
</dbReference>
<dbReference type="HAMAP" id="MF_00106">
    <property type="entry name" value="UxuA"/>
    <property type="match status" value="1"/>
</dbReference>
<dbReference type="InterPro" id="IPR004628">
    <property type="entry name" value="Man_deHydtase"/>
</dbReference>
<dbReference type="InterPro" id="IPR036237">
    <property type="entry name" value="Xyl_isomerase-like_sf"/>
</dbReference>
<dbReference type="NCBIfam" id="NF003027">
    <property type="entry name" value="PRK03906.1"/>
    <property type="match status" value="1"/>
</dbReference>
<dbReference type="NCBIfam" id="TIGR00695">
    <property type="entry name" value="uxuA"/>
    <property type="match status" value="1"/>
</dbReference>
<dbReference type="PANTHER" id="PTHR30387">
    <property type="entry name" value="MANNONATE DEHYDRATASE"/>
    <property type="match status" value="1"/>
</dbReference>
<dbReference type="PANTHER" id="PTHR30387:SF2">
    <property type="entry name" value="MANNONATE DEHYDRATASE"/>
    <property type="match status" value="1"/>
</dbReference>
<dbReference type="Pfam" id="PF03786">
    <property type="entry name" value="UxuA"/>
    <property type="match status" value="1"/>
</dbReference>
<dbReference type="PIRSF" id="PIRSF016049">
    <property type="entry name" value="Man_dehyd"/>
    <property type="match status" value="1"/>
</dbReference>
<dbReference type="SUPFAM" id="SSF51658">
    <property type="entry name" value="Xylose isomerase-like"/>
    <property type="match status" value="1"/>
</dbReference>
<comment type="function">
    <text evidence="1">Catalyzes the dehydration of D-mannonate.</text>
</comment>
<comment type="catalytic activity">
    <reaction>
        <text>D-mannonate = 2-dehydro-3-deoxy-D-gluconate + H2O</text>
        <dbReference type="Rhea" id="RHEA:20097"/>
        <dbReference type="ChEBI" id="CHEBI:15377"/>
        <dbReference type="ChEBI" id="CHEBI:17767"/>
        <dbReference type="ChEBI" id="CHEBI:57990"/>
        <dbReference type="EC" id="4.2.1.8"/>
    </reaction>
</comment>
<comment type="cofactor">
    <cofactor evidence="1">
        <name>Fe(2+)</name>
        <dbReference type="ChEBI" id="CHEBI:29033"/>
    </cofactor>
    <cofactor evidence="1">
        <name>Mn(2+)</name>
        <dbReference type="ChEBI" id="CHEBI:29035"/>
    </cofactor>
</comment>
<comment type="pathway">
    <text>Carbohydrate metabolism; pentose and glucuronate interconversion.</text>
</comment>
<comment type="similarity">
    <text evidence="2">Belongs to the mannonate dehydratase family.</text>
</comment>
<keyword id="KW-0408">Iron</keyword>
<keyword id="KW-0456">Lyase</keyword>
<keyword id="KW-0464">Manganese</keyword>
<sequence>MKMTFRWFGKEHDTVSLDHIRQIPGVEGIVGALYHIPVGEVWPLDDILELKRQVNEKGFHLEVIESVNVHEDIKLGLPSRDRYIENYKQTIRNLAKAGVKVICYNFMPIFDWTRSDLAKRRPDGSTVLAYEKQKIEQIDPEEMIRRIESGANGFLLPGWEPERLKTIKPLFSLYKGVTEEDLFDHLRYFLEQIVPVAEECGVRMALHPDDPPWSVFGLPRIATNKENLDRIVHMVNSPANGLTLCSGSLGANPANDVPDIFRHFLRMGRVPFAHVRNVEIHANGDFEETSHRSCDGSLNICEIMKALHEANFQGYIRPDHGRMIWGEQARPGYGLYDRALGIMYLLGIWDSLENEKKKQEGEKTCSRSIQV</sequence>
<gene>
    <name type="primary">uxuA</name>
</gene>
<evidence type="ECO:0000250" key="1"/>
<evidence type="ECO:0000305" key="2"/>